<accession>B7M0F8</accession>
<sequence length="566" mass="61156">MAIAIGLDFGSDSVRALAVDCASGEEIATSVEWYPRWQKGQFCDAPNNQFRHHPRDYIESMEAALKTVLAELSVEQRAAVVGIGVDTTGSTPAPIDADGNVLALRPEFAENPNAMFVLWKDHTAVEEAEEITRLCHAPGNVDYSRYIGGIYSSEWFWAKILHVTRQDTAVAQSAASWIELCDWVPALLSGTTRPQDIRRGRCSAGHKSLWHESWGGLPPASFFDELDPILNRHLPSPLFTDTWTADIPVGTLCPEWAQRLGLPESVVISGGAFDCHMGAVGAGAQPNALVKVIGTSTCDILIADKQSVGERAVKGICGQVDGSVVPGFIGLEAGQSAFGDIYAWFGRVLSWPLEQLAAQHPELKAQINASQKQLLPALTEAWAKNPSLDHLPVVLDWFNGRRTPNANQRLKGVITDLNLATDAPLLFGGLIAATAFGARAIMECFTDQGIAVNNVMALGGIARKNQVIMQACCDVLNRPLQIVASDQCCALGAAIFAAVAAKVHADIPSAQQKMASAVEKTLQPRSEQAQRFEQLYRRYQQWAMSAEQHYLPTSAPAQAAQAVATL</sequence>
<protein>
    <recommendedName>
        <fullName evidence="1">Ribulokinase</fullName>
        <ecNumber evidence="1">2.7.1.16</ecNumber>
    </recommendedName>
</protein>
<evidence type="ECO:0000255" key="1">
    <source>
        <dbReference type="HAMAP-Rule" id="MF_00520"/>
    </source>
</evidence>
<gene>
    <name evidence="1" type="primary">araB</name>
    <name type="ordered locus">ECIAI1_0063</name>
</gene>
<dbReference type="EC" id="2.7.1.16" evidence="1"/>
<dbReference type="EMBL" id="CU928160">
    <property type="protein sequence ID" value="CAQ96953.1"/>
    <property type="molecule type" value="Genomic_DNA"/>
</dbReference>
<dbReference type="RefSeq" id="WP_000951796.1">
    <property type="nucleotide sequence ID" value="NC_011741.1"/>
</dbReference>
<dbReference type="SMR" id="B7M0F8"/>
<dbReference type="KEGG" id="ecr:ECIAI1_0063"/>
<dbReference type="HOGENOM" id="CLU_009281_9_1_6"/>
<dbReference type="UniPathway" id="UPA00145">
    <property type="reaction ID" value="UER00566"/>
</dbReference>
<dbReference type="GO" id="GO:0005737">
    <property type="term" value="C:cytoplasm"/>
    <property type="evidence" value="ECO:0007669"/>
    <property type="project" value="TreeGrafter"/>
</dbReference>
<dbReference type="GO" id="GO:0005524">
    <property type="term" value="F:ATP binding"/>
    <property type="evidence" value="ECO:0007669"/>
    <property type="project" value="UniProtKB-KW"/>
</dbReference>
<dbReference type="GO" id="GO:0019150">
    <property type="term" value="F:D-ribulokinase activity"/>
    <property type="evidence" value="ECO:0007669"/>
    <property type="project" value="TreeGrafter"/>
</dbReference>
<dbReference type="GO" id="GO:0008741">
    <property type="term" value="F:ribulokinase activity"/>
    <property type="evidence" value="ECO:0007669"/>
    <property type="project" value="UniProtKB-UniRule"/>
</dbReference>
<dbReference type="GO" id="GO:0019569">
    <property type="term" value="P:L-arabinose catabolic process to xylulose 5-phosphate"/>
    <property type="evidence" value="ECO:0007669"/>
    <property type="project" value="UniProtKB-UniRule"/>
</dbReference>
<dbReference type="CDD" id="cd07781">
    <property type="entry name" value="ASKHA_NBD_FGGY_L-RBK"/>
    <property type="match status" value="1"/>
</dbReference>
<dbReference type="Gene3D" id="1.20.58.2240">
    <property type="match status" value="1"/>
</dbReference>
<dbReference type="Gene3D" id="3.30.420.40">
    <property type="match status" value="1"/>
</dbReference>
<dbReference type="HAMAP" id="MF_00520">
    <property type="entry name" value="Ribulokinase"/>
    <property type="match status" value="1"/>
</dbReference>
<dbReference type="InterPro" id="IPR043129">
    <property type="entry name" value="ATPase_NBD"/>
</dbReference>
<dbReference type="InterPro" id="IPR018485">
    <property type="entry name" value="FGGY_C"/>
</dbReference>
<dbReference type="InterPro" id="IPR005929">
    <property type="entry name" value="Ribulokinase"/>
</dbReference>
<dbReference type="NCBIfam" id="TIGR01234">
    <property type="entry name" value="L-ribulokinase"/>
    <property type="match status" value="1"/>
</dbReference>
<dbReference type="NCBIfam" id="NF003154">
    <property type="entry name" value="PRK04123.1"/>
    <property type="match status" value="1"/>
</dbReference>
<dbReference type="PANTHER" id="PTHR43435:SF4">
    <property type="entry name" value="FGGY CARBOHYDRATE KINASE DOMAIN-CONTAINING PROTEIN"/>
    <property type="match status" value="1"/>
</dbReference>
<dbReference type="PANTHER" id="PTHR43435">
    <property type="entry name" value="RIBULOKINASE"/>
    <property type="match status" value="1"/>
</dbReference>
<dbReference type="Pfam" id="PF02782">
    <property type="entry name" value="FGGY_C"/>
    <property type="match status" value="1"/>
</dbReference>
<dbReference type="SUPFAM" id="SSF53067">
    <property type="entry name" value="Actin-like ATPase domain"/>
    <property type="match status" value="2"/>
</dbReference>
<proteinExistence type="inferred from homology"/>
<name>ARAB_ECO8A</name>
<comment type="catalytic activity">
    <reaction evidence="1">
        <text>D-ribulose + ATP = D-ribulose 5-phosphate + ADP + H(+)</text>
        <dbReference type="Rhea" id="RHEA:17601"/>
        <dbReference type="ChEBI" id="CHEBI:15378"/>
        <dbReference type="ChEBI" id="CHEBI:17173"/>
        <dbReference type="ChEBI" id="CHEBI:30616"/>
        <dbReference type="ChEBI" id="CHEBI:58121"/>
        <dbReference type="ChEBI" id="CHEBI:456216"/>
        <dbReference type="EC" id="2.7.1.16"/>
    </reaction>
</comment>
<comment type="catalytic activity">
    <reaction evidence="1">
        <text>L-ribulose + ATP = L-ribulose 5-phosphate + ADP + H(+)</text>
        <dbReference type="Rhea" id="RHEA:22072"/>
        <dbReference type="ChEBI" id="CHEBI:15378"/>
        <dbReference type="ChEBI" id="CHEBI:16880"/>
        <dbReference type="ChEBI" id="CHEBI:30616"/>
        <dbReference type="ChEBI" id="CHEBI:58226"/>
        <dbReference type="ChEBI" id="CHEBI:456216"/>
        <dbReference type="EC" id="2.7.1.16"/>
    </reaction>
</comment>
<comment type="pathway">
    <text evidence="1">Carbohydrate degradation; L-arabinose degradation via L-ribulose; D-xylulose 5-phosphate from L-arabinose (bacterial route): step 2/3.</text>
</comment>
<comment type="similarity">
    <text evidence="1">Belongs to the ribulokinase family.</text>
</comment>
<feature type="chain" id="PRO_1000127629" description="Ribulokinase">
    <location>
        <begin position="1"/>
        <end position="566"/>
    </location>
</feature>
<keyword id="KW-0054">Arabinose catabolism</keyword>
<keyword id="KW-0067">ATP-binding</keyword>
<keyword id="KW-0119">Carbohydrate metabolism</keyword>
<keyword id="KW-0418">Kinase</keyword>
<keyword id="KW-0547">Nucleotide-binding</keyword>
<keyword id="KW-0808">Transferase</keyword>
<reference key="1">
    <citation type="journal article" date="2009" name="PLoS Genet.">
        <title>Organised genome dynamics in the Escherichia coli species results in highly diverse adaptive paths.</title>
        <authorList>
            <person name="Touchon M."/>
            <person name="Hoede C."/>
            <person name="Tenaillon O."/>
            <person name="Barbe V."/>
            <person name="Baeriswyl S."/>
            <person name="Bidet P."/>
            <person name="Bingen E."/>
            <person name="Bonacorsi S."/>
            <person name="Bouchier C."/>
            <person name="Bouvet O."/>
            <person name="Calteau A."/>
            <person name="Chiapello H."/>
            <person name="Clermont O."/>
            <person name="Cruveiller S."/>
            <person name="Danchin A."/>
            <person name="Diard M."/>
            <person name="Dossat C."/>
            <person name="Karoui M.E."/>
            <person name="Frapy E."/>
            <person name="Garry L."/>
            <person name="Ghigo J.M."/>
            <person name="Gilles A.M."/>
            <person name="Johnson J."/>
            <person name="Le Bouguenec C."/>
            <person name="Lescat M."/>
            <person name="Mangenot S."/>
            <person name="Martinez-Jehanne V."/>
            <person name="Matic I."/>
            <person name="Nassif X."/>
            <person name="Oztas S."/>
            <person name="Petit M.A."/>
            <person name="Pichon C."/>
            <person name="Rouy Z."/>
            <person name="Ruf C.S."/>
            <person name="Schneider D."/>
            <person name="Tourret J."/>
            <person name="Vacherie B."/>
            <person name="Vallenet D."/>
            <person name="Medigue C."/>
            <person name="Rocha E.P.C."/>
            <person name="Denamur E."/>
        </authorList>
    </citation>
    <scope>NUCLEOTIDE SEQUENCE [LARGE SCALE GENOMIC DNA]</scope>
    <source>
        <strain>IAI1</strain>
    </source>
</reference>
<organism>
    <name type="scientific">Escherichia coli O8 (strain IAI1)</name>
    <dbReference type="NCBI Taxonomy" id="585034"/>
    <lineage>
        <taxon>Bacteria</taxon>
        <taxon>Pseudomonadati</taxon>
        <taxon>Pseudomonadota</taxon>
        <taxon>Gammaproteobacteria</taxon>
        <taxon>Enterobacterales</taxon>
        <taxon>Enterobacteriaceae</taxon>
        <taxon>Escherichia</taxon>
    </lineage>
</organism>